<name>ZBT7A_MOUSE</name>
<organism>
    <name type="scientific">Mus musculus</name>
    <name type="common">Mouse</name>
    <dbReference type="NCBI Taxonomy" id="10090"/>
    <lineage>
        <taxon>Eukaryota</taxon>
        <taxon>Metazoa</taxon>
        <taxon>Chordata</taxon>
        <taxon>Craniata</taxon>
        <taxon>Vertebrata</taxon>
        <taxon>Euteleostomi</taxon>
        <taxon>Mammalia</taxon>
        <taxon>Eutheria</taxon>
        <taxon>Euarchontoglires</taxon>
        <taxon>Glires</taxon>
        <taxon>Rodentia</taxon>
        <taxon>Myomorpha</taxon>
        <taxon>Muroidea</taxon>
        <taxon>Muridae</taxon>
        <taxon>Murinae</taxon>
        <taxon>Mus</taxon>
        <taxon>Mus</taxon>
    </lineage>
</organism>
<evidence type="ECO:0000250" key="1">
    <source>
        <dbReference type="UniProtKB" id="O95365"/>
    </source>
</evidence>
<evidence type="ECO:0000250" key="2">
    <source>
        <dbReference type="UniProtKB" id="Q9QZ48"/>
    </source>
</evidence>
<evidence type="ECO:0000255" key="3">
    <source>
        <dbReference type="PROSITE-ProRule" id="PRU00037"/>
    </source>
</evidence>
<evidence type="ECO:0000255" key="4">
    <source>
        <dbReference type="PROSITE-ProRule" id="PRU00042"/>
    </source>
</evidence>
<evidence type="ECO:0000256" key="5">
    <source>
        <dbReference type="SAM" id="MobiDB-lite"/>
    </source>
</evidence>
<evidence type="ECO:0000269" key="6">
    <source>
    </source>
</evidence>
<evidence type="ECO:0000269" key="7">
    <source>
    </source>
</evidence>
<evidence type="ECO:0000269" key="8">
    <source>
    </source>
</evidence>
<evidence type="ECO:0000269" key="9">
    <source>
    </source>
</evidence>
<evidence type="ECO:0000269" key="10">
    <source>
    </source>
</evidence>
<evidence type="ECO:0000269" key="11">
    <source>
    </source>
</evidence>
<evidence type="ECO:0000269" key="12">
    <source>
    </source>
</evidence>
<evidence type="ECO:0000269" key="13">
    <source>
    </source>
</evidence>
<evidence type="ECO:0000303" key="14">
    <source>
    </source>
</evidence>
<evidence type="ECO:0000303" key="15">
    <source>
    </source>
</evidence>
<evidence type="ECO:0000305" key="16"/>
<evidence type="ECO:0000312" key="17">
    <source>
        <dbReference type="MGI" id="MGI:1335091"/>
    </source>
</evidence>
<evidence type="ECO:0007744" key="18">
    <source>
    </source>
</evidence>
<evidence type="ECO:0007744" key="19">
    <source>
    </source>
</evidence>
<proteinExistence type="evidence at protein level"/>
<comment type="function">
    <text evidence="1 2 7 8 9 10 11 12">Transcription factor that represses the transcription of a wide range of genes involved in cell proliferation and differentiation (PubMed:15337766, PubMed:15662416, PubMed:17495164, PubMed:26816381, PubMed:29813070). Directly and specifically binds to the consensus sequence 5'-[GA][CA]GACCCCCCCCC-3' and represses transcription both by regulating the organization of chromatin and through the direct recruitment of transcription factors to gene regulatory regions (PubMed:15337766, PubMed:15662416, PubMed:26816381, PubMed:29813070). Negatively regulates SMAD4 transcriptional activity in the TGF-beta signaling pathway through these two mechanisms (By similarity). That is, recruits the chromatin regulator HDAC1 to the SMAD4-DNA complex and in parallel prevents the recruitment of the transcriptional activators CREBBP and EP300 (By similarity). Collaborates with transcription factors like RELA to modify the accessibility of gene transcription regulatory regions to secondary transcription factors (PubMed:29813070). Also directly interacts with transcription factors like SP1 to prevent their binding to DNA (By similarity). Functions as an androgen receptor/AR transcriptional corepressor by recruiting NCOR1 and NCOR2 to the androgen response elements/ARE on target genes (By similarity). Thereby, negatively regulates androgen receptor signaling and androgen-induced cell proliferation (By similarity). Involved in the switch between fetal and adult globin expression during erythroid cells maturation (PubMed:26816381). Through its interaction with the NuRD complex regulates chromatin at the fetal globin genes to repress their transcription (PubMed:26816381). Specifically represses the transcription of the tumor suppressor ARF isoform from the CDKN2A gene (PubMed:15662416). Efficiently abrogates E2F1-dependent CDKN2A transactivation (PubMed:15662416). Regulates chondrogenesis through the transcriptional repression of specific genes via a mechanism that also requires histone deacetylation (PubMed:15337766). Regulates cell proliferation through the transcriptional regulation of genes involved in glycolysis (By similarity). Involved in adipogenesis through the regulation of genes involved in adipocyte differentiation (By similarity). Plays a key role in the differentiation of lymphoid progenitors into B and T lineages (PubMed:17495164). Promotes differentiation towards the B lineage by inhibiting the T-cell instructive Notch signaling pathway through the specific transcriptional repression of Notch downstream target genes (PubMed:17495164). Also regulates osteoclast differentiation (By similarity). May also play a role, independently of its transcriptional activity, in double-strand break repair via classical non-homologous end joining/cNHEJ (PubMed:26446488). Recruited to double-strand break sites on damage DNA, interacts with the DNA-dependent protein kinase complex and directly regulates its stability and activity in DNA repair (PubMed:26446488). May also modulate the splicing activity of KHDRBS1 toward BCL2L1 in a mechanism which is histone deacetylase-dependent and thereby negatively regulates the pro-apoptotic effect of KHDRBS1 (By similarity).</text>
</comment>
<comment type="subunit">
    <text evidence="1 10 12 13">Homodimer (By similarity). Interacts with BCL6 (PubMed:9927193). Interacts with RELA; involved in the control by RELA of the accessibility of target gene promoters (PubMed:29813070). Interacts with AR (via NR LBD domain); the interaction is direct and androgen-dependent (By similarity). Interacts with NCOR1 (By similarity). Interacts with NCOR2 (By similarity). Interacts with SMAD4; the interaction is direct and stimulated by TGFB1 (By similarity). Interacts with HDAC1 (By similarity). Interacts with SP1; ZBTB7A prevents the binding to GC-rich motifs in promoters and represses the transcriptional activity of SP1 (By similarity). Interacts with the DNA-dependent protein kinase complex/DNA-PKc (PubMed:26446488). Interacts with KHDRBS1; negatively regulates KHDRBS1 splicing activity (By similarity).</text>
</comment>
<comment type="interaction">
    <interactant intactId="EBI-595063">
        <id>O88939</id>
    </interactant>
    <interactant intactId="EBI-301912">
        <id>O09106</id>
        <label>Hdac1</label>
    </interactant>
    <organismsDiffer>false</organismsDiffer>
    <experiments>3</experiments>
</comment>
<comment type="subcellular location">
    <subcellularLocation>
        <location evidence="8 13">Nucleus</location>
    </subcellularLocation>
    <text evidence="10">Recruited to double-strand break sites of damaged DNA.</text>
</comment>
<comment type="alternative products">
    <event type="alternative splicing"/>
    <isoform>
        <id>O88939-1</id>
        <name>1</name>
        <sequence type="displayed"/>
    </isoform>
    <isoform>
        <id>O88939-2</id>
        <name>2</name>
        <sequence type="described" ref="VSP_035026"/>
    </isoform>
</comment>
<comment type="tissue specificity">
    <text evidence="8 13">Widely expressed (PubMed:9927193). In normal thymus, expressed in medullary epithelial cells and Hassle's corpuscles (at protein level) (PubMed:15662416). In the spleen, mainly expressed in the white pulp germinal centers (at protein level) (PubMed:15662416). Up-regulated in thymic lymphomas (PubMed:15662416).</text>
</comment>
<comment type="developmental stage">
    <text evidence="6 13">Expressed at 9.5-10.0 dpc in limb buds, pharyngeal arches, tail bud, placenta and neural tube (PubMed:9927193). Up-regulated during adipocyte differentiation (PubMed:14701838).</text>
</comment>
<comment type="domain">
    <text evidence="1">The BTB domain mediates the interaction with the androgen receptor/AR and HDAC1. Also mediates the interaction with SP1.</text>
</comment>
<comment type="PTM">
    <text evidence="1">Sumoylated. Undergoes sumoylation with SUMO1 that may regulate its transcriptional activity.</text>
</comment>
<comment type="disruption phenotype">
    <text evidence="9 11">Death around 16.5 dpc because of severe anemia with a profound block in early B-cell development (PubMed:17495164). Conditional knockout in erythroid cells, leads to the expression of fetal globin in peripheral blood of adult mice and inefficient erythroid terminal differentiation (PubMed:26816381).</text>
</comment>
<reference key="1">
    <citation type="journal article" date="1999" name="Oncogene">
        <title>Novel BTB/POZ domain zinc-finger protein, LRF, is a potential target of the LAZ-3/BCL-6 oncogene.</title>
        <authorList>
            <person name="Davies J.M."/>
            <person name="Hawe N."/>
            <person name="Kabarowski J."/>
            <person name="Huang Q.-H."/>
            <person name="Zhu J."/>
            <person name="Brand N.J."/>
            <person name="Leprince D."/>
            <person name="Dhordain P."/>
            <person name="Cook M."/>
            <person name="Moriss-Kay G."/>
            <person name="Zelent A."/>
        </authorList>
    </citation>
    <scope>NUCLEOTIDE SEQUENCE [MRNA] (ISOFORM 2)</scope>
    <scope>INTERACTION WITH BCL6</scope>
    <scope>SUBCELLULAR LOCATION</scope>
    <scope>DEVELOPMENTAL STAGE</scope>
    <scope>TISSUE SPECIFICITY</scope>
</reference>
<reference key="2">
    <citation type="journal article" date="2005" name="Science">
        <title>The transcriptional landscape of the mammalian genome.</title>
        <authorList>
            <person name="Carninci P."/>
            <person name="Kasukawa T."/>
            <person name="Katayama S."/>
            <person name="Gough J."/>
            <person name="Frith M.C."/>
            <person name="Maeda N."/>
            <person name="Oyama R."/>
            <person name="Ravasi T."/>
            <person name="Lenhard B."/>
            <person name="Wells C."/>
            <person name="Kodzius R."/>
            <person name="Shimokawa K."/>
            <person name="Bajic V.B."/>
            <person name="Brenner S.E."/>
            <person name="Batalov S."/>
            <person name="Forrest A.R."/>
            <person name="Zavolan M."/>
            <person name="Davis M.J."/>
            <person name="Wilming L.G."/>
            <person name="Aidinis V."/>
            <person name="Allen J.E."/>
            <person name="Ambesi-Impiombato A."/>
            <person name="Apweiler R."/>
            <person name="Aturaliya R.N."/>
            <person name="Bailey T.L."/>
            <person name="Bansal M."/>
            <person name="Baxter L."/>
            <person name="Beisel K.W."/>
            <person name="Bersano T."/>
            <person name="Bono H."/>
            <person name="Chalk A.M."/>
            <person name="Chiu K.P."/>
            <person name="Choudhary V."/>
            <person name="Christoffels A."/>
            <person name="Clutterbuck D.R."/>
            <person name="Crowe M.L."/>
            <person name="Dalla E."/>
            <person name="Dalrymple B.P."/>
            <person name="de Bono B."/>
            <person name="Della Gatta G."/>
            <person name="di Bernardo D."/>
            <person name="Down T."/>
            <person name="Engstrom P."/>
            <person name="Fagiolini M."/>
            <person name="Faulkner G."/>
            <person name="Fletcher C.F."/>
            <person name="Fukushima T."/>
            <person name="Furuno M."/>
            <person name="Futaki S."/>
            <person name="Gariboldi M."/>
            <person name="Georgii-Hemming P."/>
            <person name="Gingeras T.R."/>
            <person name="Gojobori T."/>
            <person name="Green R.E."/>
            <person name="Gustincich S."/>
            <person name="Harbers M."/>
            <person name="Hayashi Y."/>
            <person name="Hensch T.K."/>
            <person name="Hirokawa N."/>
            <person name="Hill D."/>
            <person name="Huminiecki L."/>
            <person name="Iacono M."/>
            <person name="Ikeo K."/>
            <person name="Iwama A."/>
            <person name="Ishikawa T."/>
            <person name="Jakt M."/>
            <person name="Kanapin A."/>
            <person name="Katoh M."/>
            <person name="Kawasawa Y."/>
            <person name="Kelso J."/>
            <person name="Kitamura H."/>
            <person name="Kitano H."/>
            <person name="Kollias G."/>
            <person name="Krishnan S.P."/>
            <person name="Kruger A."/>
            <person name="Kummerfeld S.K."/>
            <person name="Kurochkin I.V."/>
            <person name="Lareau L.F."/>
            <person name="Lazarevic D."/>
            <person name="Lipovich L."/>
            <person name="Liu J."/>
            <person name="Liuni S."/>
            <person name="McWilliam S."/>
            <person name="Madan Babu M."/>
            <person name="Madera M."/>
            <person name="Marchionni L."/>
            <person name="Matsuda H."/>
            <person name="Matsuzawa S."/>
            <person name="Miki H."/>
            <person name="Mignone F."/>
            <person name="Miyake S."/>
            <person name="Morris K."/>
            <person name="Mottagui-Tabar S."/>
            <person name="Mulder N."/>
            <person name="Nakano N."/>
            <person name="Nakauchi H."/>
            <person name="Ng P."/>
            <person name="Nilsson R."/>
            <person name="Nishiguchi S."/>
            <person name="Nishikawa S."/>
            <person name="Nori F."/>
            <person name="Ohara O."/>
            <person name="Okazaki Y."/>
            <person name="Orlando V."/>
            <person name="Pang K.C."/>
            <person name="Pavan W.J."/>
            <person name="Pavesi G."/>
            <person name="Pesole G."/>
            <person name="Petrovsky N."/>
            <person name="Piazza S."/>
            <person name="Reed J."/>
            <person name="Reid J.F."/>
            <person name="Ring B.Z."/>
            <person name="Ringwald M."/>
            <person name="Rost B."/>
            <person name="Ruan Y."/>
            <person name="Salzberg S.L."/>
            <person name="Sandelin A."/>
            <person name="Schneider C."/>
            <person name="Schoenbach C."/>
            <person name="Sekiguchi K."/>
            <person name="Semple C.A."/>
            <person name="Seno S."/>
            <person name="Sessa L."/>
            <person name="Sheng Y."/>
            <person name="Shibata Y."/>
            <person name="Shimada H."/>
            <person name="Shimada K."/>
            <person name="Silva D."/>
            <person name="Sinclair B."/>
            <person name="Sperling S."/>
            <person name="Stupka E."/>
            <person name="Sugiura K."/>
            <person name="Sultana R."/>
            <person name="Takenaka Y."/>
            <person name="Taki K."/>
            <person name="Tammoja K."/>
            <person name="Tan S.L."/>
            <person name="Tang S."/>
            <person name="Taylor M.S."/>
            <person name="Tegner J."/>
            <person name="Teichmann S.A."/>
            <person name="Ueda H.R."/>
            <person name="van Nimwegen E."/>
            <person name="Verardo R."/>
            <person name="Wei C.L."/>
            <person name="Yagi K."/>
            <person name="Yamanishi H."/>
            <person name="Zabarovsky E."/>
            <person name="Zhu S."/>
            <person name="Zimmer A."/>
            <person name="Hide W."/>
            <person name="Bult C."/>
            <person name="Grimmond S.M."/>
            <person name="Teasdale R.D."/>
            <person name="Liu E.T."/>
            <person name="Brusic V."/>
            <person name="Quackenbush J."/>
            <person name="Wahlestedt C."/>
            <person name="Mattick J.S."/>
            <person name="Hume D.A."/>
            <person name="Kai C."/>
            <person name="Sasaki D."/>
            <person name="Tomaru Y."/>
            <person name="Fukuda S."/>
            <person name="Kanamori-Katayama M."/>
            <person name="Suzuki M."/>
            <person name="Aoki J."/>
            <person name="Arakawa T."/>
            <person name="Iida J."/>
            <person name="Imamura K."/>
            <person name="Itoh M."/>
            <person name="Kato T."/>
            <person name="Kawaji H."/>
            <person name="Kawagashira N."/>
            <person name="Kawashima T."/>
            <person name="Kojima M."/>
            <person name="Kondo S."/>
            <person name="Konno H."/>
            <person name="Nakano K."/>
            <person name="Ninomiya N."/>
            <person name="Nishio T."/>
            <person name="Okada M."/>
            <person name="Plessy C."/>
            <person name="Shibata K."/>
            <person name="Shiraki T."/>
            <person name="Suzuki S."/>
            <person name="Tagami M."/>
            <person name="Waki K."/>
            <person name="Watahiki A."/>
            <person name="Okamura-Oho Y."/>
            <person name="Suzuki H."/>
            <person name="Kawai J."/>
            <person name="Hayashizaki Y."/>
        </authorList>
    </citation>
    <scope>NUCLEOTIDE SEQUENCE [LARGE SCALE MRNA] (ISOFORM 1)</scope>
    <source>
        <strain>C57BL/6J</strain>
        <strain>NOD</strain>
        <tissue>Dendritic cell</tissue>
        <tissue>Embryonic stem cell</tissue>
    </source>
</reference>
<reference key="3">
    <citation type="submission" date="2005-09" db="EMBL/GenBank/DDBJ databases">
        <authorList>
            <person name="Mural R.J."/>
            <person name="Adams M.D."/>
            <person name="Myers E.W."/>
            <person name="Smith H.O."/>
            <person name="Venter J.C."/>
        </authorList>
    </citation>
    <scope>NUCLEOTIDE SEQUENCE [LARGE SCALE GENOMIC DNA]</scope>
</reference>
<reference key="4">
    <citation type="journal article" date="2004" name="Genome Res.">
        <title>The status, quality, and expansion of the NIH full-length cDNA project: the Mammalian Gene Collection (MGC).</title>
        <authorList>
            <consortium name="The MGC Project Team"/>
        </authorList>
    </citation>
    <scope>NUCLEOTIDE SEQUENCE [LARGE SCALE MRNA] (ISOFORM 1)</scope>
    <source>
        <strain>NMRI</strain>
        <tissue>Brain</tissue>
        <tissue>Mammary tumor</tissue>
    </source>
</reference>
<reference key="5">
    <citation type="journal article" date="2004" name="J. Biol. Chem.">
        <title>Role of the POZ zinc finger transcription factor FBI-1 in human and murine adipogenesis.</title>
        <authorList>
            <person name="Laudes M."/>
            <person name="Christodoulides C."/>
            <person name="Sewter C."/>
            <person name="Rochford J.J."/>
            <person name="Considine R.V."/>
            <person name="Sethi J.K."/>
            <person name="Vidal-Puig A."/>
            <person name="O'Rahilly S."/>
        </authorList>
    </citation>
    <scope>DEVELOPMENTAL STAGE</scope>
</reference>
<reference key="6">
    <citation type="journal article" date="2004" name="J. Biol. Chem.">
        <title>Leukemia/lymphoma-related factor, a POZ domain-containing transcriptional repressor, interacts with histone deacetylase-1 and inhibits cartilage oligomeric matrix protein gene expression and chondrogenesis.</title>
        <authorList>
            <person name="Liu C.J."/>
            <person name="Prazak L."/>
            <person name="Fajardo M."/>
            <person name="Yu S."/>
            <person name="Tyagi N."/>
            <person name="Di Cesare P.E."/>
        </authorList>
    </citation>
    <scope>FUNCTION</scope>
</reference>
<reference key="7">
    <citation type="journal article" date="2005" name="Nature">
        <title>Role of the proto-oncogene Pokemon in cellular transformation and ARF repression.</title>
        <authorList>
            <person name="Maeda T."/>
            <person name="Hobbs R.M."/>
            <person name="Merghoub T."/>
            <person name="Guernah I."/>
            <person name="Zelent A."/>
            <person name="Cordon-Cardo C."/>
            <person name="Teruya-Feldstein J."/>
            <person name="Pandolfi P.P."/>
        </authorList>
    </citation>
    <scope>FUNCTION</scope>
    <scope>DNA-BINDING</scope>
    <scope>SUBCELLULAR LOCATION</scope>
    <scope>TISSUE SPECIFICITY</scope>
</reference>
<reference key="8">
    <citation type="journal article" date="2007" name="Science">
        <title>Regulation of B versus T lymphoid lineage fate decision by the proto-oncogene LRF.</title>
        <authorList>
            <person name="Maeda T."/>
            <person name="Merghoub T."/>
            <person name="Hobbs R.M."/>
            <person name="Dong L."/>
            <person name="Maeda M."/>
            <person name="Zakrzewski J."/>
            <person name="van den Brink M.R.M."/>
            <person name="Zelent A."/>
            <person name="Shigematsu H."/>
            <person name="Akashi K."/>
            <person name="Teruya-Feldstein J."/>
            <person name="Cattoretti G."/>
            <person name="Pandolfi P.P."/>
        </authorList>
    </citation>
    <scope>FUNCTION</scope>
    <scope>DISRUPTION PHENOTYPE</scope>
</reference>
<reference key="9">
    <citation type="journal article" date="2009" name="Immunity">
        <title>The phagosomal proteome in interferon-gamma-activated macrophages.</title>
        <authorList>
            <person name="Trost M."/>
            <person name="English L."/>
            <person name="Lemieux S."/>
            <person name="Courcelles M."/>
            <person name="Desjardins M."/>
            <person name="Thibault P."/>
        </authorList>
    </citation>
    <scope>PHOSPHORYLATION [LARGE SCALE ANALYSIS] AT SER-331</scope>
    <scope>IDENTIFICATION BY MASS SPECTROMETRY [LARGE SCALE ANALYSIS]</scope>
</reference>
<reference key="10">
    <citation type="journal article" date="2010" name="Cell">
        <title>A tissue-specific atlas of mouse protein phosphorylation and expression.</title>
        <authorList>
            <person name="Huttlin E.L."/>
            <person name="Jedrychowski M.P."/>
            <person name="Elias J.E."/>
            <person name="Goswami T."/>
            <person name="Rad R."/>
            <person name="Beausoleil S.A."/>
            <person name="Villen J."/>
            <person name="Haas W."/>
            <person name="Sowa M.E."/>
            <person name="Gygi S.P."/>
        </authorList>
    </citation>
    <scope>PHOSPHORYLATION [LARGE SCALE ANALYSIS] AT SER-331 AND SER-537</scope>
    <scope>IDENTIFICATION BY MASS SPECTROMETRY [LARGE SCALE ANALYSIS]</scope>
    <source>
        <tissue>Brown adipose tissue</tissue>
        <tissue>Kidney</tissue>
        <tissue>Lung</tissue>
        <tissue>Pancreas</tissue>
        <tissue>Spleen</tissue>
        <tissue>Testis</tissue>
    </source>
</reference>
<reference key="11">
    <citation type="journal article" date="2015" name="Nat. Commun.">
        <title>LRF maintains genome integrity by regulating the non-homologous end joining pathway of DNA repair.</title>
        <authorList>
            <person name="Liu X.S."/>
            <person name="Chandramouly G."/>
            <person name="Rass E."/>
            <person name="Guan Y."/>
            <person name="Wang G."/>
            <person name="Hobbs R.M."/>
            <person name="Rajendran A."/>
            <person name="Xie A."/>
            <person name="Shah J.V."/>
            <person name="Davis A.J."/>
            <person name="Scully R."/>
            <person name="Lunardi A."/>
            <person name="Pandolfi P.P."/>
        </authorList>
    </citation>
    <scope>FUNCTION</scope>
    <scope>INTERACTION WITH THE DNA-DEPENDENT PROTEIN KINASE COMPLEX</scope>
    <scope>SUBCELLULAR LOCATION</scope>
</reference>
<reference key="12">
    <citation type="journal article" date="2016" name="Science">
        <title>Transcription factors LRF and BCL11A independently repress expression of fetal hemoglobin.</title>
        <authorList>
            <person name="Masuda T."/>
            <person name="Wang X."/>
            <person name="Maeda M."/>
            <person name="Canver M.C."/>
            <person name="Sher F."/>
            <person name="Funnell A.P."/>
            <person name="Fisher C."/>
            <person name="Suciu M."/>
            <person name="Martyn G.E."/>
            <person name="Norton L.J."/>
            <person name="Zhu C."/>
            <person name="Kurita R."/>
            <person name="Nakamura Y."/>
            <person name="Xu J."/>
            <person name="Higgs D.R."/>
            <person name="Crossley M."/>
            <person name="Bauer D.E."/>
            <person name="Orkin S.H."/>
            <person name="Kharchenko P.V."/>
            <person name="Maeda T."/>
        </authorList>
    </citation>
    <scope>FUNCTION</scope>
    <scope>DISRUPTION PHENOTYPE</scope>
</reference>
<reference key="13">
    <citation type="journal article" date="2018" name="PLoS Biol.">
        <title>Zbtb7a is a transducer for the control of promoter accessibility by NF-kappa B and multiple other transcription factors.</title>
        <authorList>
            <person name="Ramos Pittol J.M."/>
            <person name="Oruba A."/>
            <person name="Mittler G."/>
            <person name="Saccani S."/>
            <person name="van Essen D."/>
        </authorList>
    </citation>
    <scope>FUNCTION</scope>
    <scope>INTERACTION WITH RELA</scope>
    <scope>REGION</scope>
    <scope>DNA-BINDING</scope>
</reference>
<keyword id="KW-0025">Alternative splicing</keyword>
<keyword id="KW-0217">Developmental protein</keyword>
<keyword id="KW-0221">Differentiation</keyword>
<keyword id="KW-0227">DNA damage</keyword>
<keyword id="KW-0234">DNA repair</keyword>
<keyword id="KW-0238">DNA-binding</keyword>
<keyword id="KW-1017">Isopeptide bond</keyword>
<keyword id="KW-0479">Metal-binding</keyword>
<keyword id="KW-0539">Nucleus</keyword>
<keyword id="KW-0597">Phosphoprotein</keyword>
<keyword id="KW-1185">Reference proteome</keyword>
<keyword id="KW-0677">Repeat</keyword>
<keyword id="KW-0678">Repressor</keyword>
<keyword id="KW-0804">Transcription</keyword>
<keyword id="KW-0805">Transcription regulation</keyword>
<keyword id="KW-0832">Ubl conjugation</keyword>
<keyword id="KW-0862">Zinc</keyword>
<keyword id="KW-0863">Zinc-finger</keyword>
<protein>
    <recommendedName>
        <fullName evidence="16">Zinc finger and BTB domain-containing protein 7A</fullName>
    </recommendedName>
    <alternativeName>
        <fullName evidence="15">Leukemia/lymphoma-related factor</fullName>
    </alternativeName>
    <alternativeName>
        <fullName evidence="14">POZ and Krueppel erythroid myeloid ontogenic factor</fullName>
        <shortName evidence="14">POK erythroid myeloid ontogenic factor</shortName>
        <shortName evidence="14">Pokemon</shortName>
    </alternativeName>
</protein>
<sequence length="569" mass="60281">MAGGVDGPIGIPFPDHSSDILSGLNEQRTQGLLCDVVILVEGREFPTHRSVLAACSQYFKKLFTSGAVVDQQNVYEIDFVSAEALTALMDFAYTATLTVSTANVGDILSAARLLEIPAVSHVCADLLERQILAADDVGDASQPDGAGPTDQRNLLRAKEYLEFFRSNPMNSLPPTAFPWSGFGAPDDDLDATKEAVAAAVAAVAAGDCNGLDFYGPGPPADRPPAGDGDEGDSTPGLWPERDEDAPPGGLFPPPTAPPATTQNGHYGRAGAGTGEEEAAALSEAAPEPGDSPGFLSGAAEGEDGDAADVDGLAASTLLQQMMSSVGRAGDSDEESRTDDKGVMDYYLKYFSGAHEGDVYPAWSQKGEKKIRAKAFQKCPICEKVIQGAGKLPRHIRTHTGEKPYECNICKVRFTRQDKLKVHMRKHTGEKPYLCQQCGAAFAHNYDLKNHMRVHTGLRPYQCDSCCKTFVRSDHLHRHLKKDGCNGVPSRRGRKPRVRGVPPDVPAGAGAPPGLPDAPRNGQEKHFKDEEEDEEEASPDGSGRLNVAGSGGDDGAGGPAVATAEGNFAT</sequence>
<dbReference type="EMBL" id="AF086830">
    <property type="protein sequence ID" value="AAC35367.1"/>
    <property type="molecule type" value="mRNA"/>
</dbReference>
<dbReference type="EMBL" id="AK010379">
    <property type="protein sequence ID" value="BAB26897.1"/>
    <property type="molecule type" value="mRNA"/>
</dbReference>
<dbReference type="EMBL" id="AK154907">
    <property type="protein sequence ID" value="BAE32917.1"/>
    <property type="molecule type" value="mRNA"/>
</dbReference>
<dbReference type="EMBL" id="CH466553">
    <property type="protein sequence ID" value="EDL31455.1"/>
    <property type="molecule type" value="Genomic_DNA"/>
</dbReference>
<dbReference type="EMBL" id="BC057204">
    <property type="protein sequence ID" value="AAH57204.1"/>
    <property type="molecule type" value="mRNA"/>
</dbReference>
<dbReference type="EMBL" id="BC138524">
    <property type="protein sequence ID" value="AAI38525.1"/>
    <property type="molecule type" value="mRNA"/>
</dbReference>
<dbReference type="EMBL" id="BC145311">
    <property type="protein sequence ID" value="AAI45312.1"/>
    <property type="molecule type" value="mRNA"/>
</dbReference>
<dbReference type="CCDS" id="CCDS35991.1">
    <molecule id="O88939-1"/>
</dbReference>
<dbReference type="RefSeq" id="NP_001391790.1">
    <molecule id="O88939-1"/>
    <property type="nucleotide sequence ID" value="NM_001404861.1"/>
</dbReference>
<dbReference type="RefSeq" id="NP_001391791.1">
    <molecule id="O88939-1"/>
    <property type="nucleotide sequence ID" value="NM_001404862.1"/>
</dbReference>
<dbReference type="RefSeq" id="NP_001391792.1">
    <molecule id="O88939-1"/>
    <property type="nucleotide sequence ID" value="NM_001404863.1"/>
</dbReference>
<dbReference type="RefSeq" id="NP_001391793.1">
    <molecule id="O88939-1"/>
    <property type="nucleotide sequence ID" value="NM_001404864.1"/>
</dbReference>
<dbReference type="RefSeq" id="NP_001391794.1">
    <molecule id="O88939-1"/>
    <property type="nucleotide sequence ID" value="NM_001404865.1"/>
</dbReference>
<dbReference type="RefSeq" id="NP_001391795.1">
    <molecule id="O88939-1"/>
    <property type="nucleotide sequence ID" value="NM_001404866.1"/>
</dbReference>
<dbReference type="RefSeq" id="NP_001391796.1">
    <molecule id="O88939-1"/>
    <property type="nucleotide sequence ID" value="NM_001404867.1"/>
</dbReference>
<dbReference type="RefSeq" id="NP_034861.3">
    <molecule id="O88939-1"/>
    <property type="nucleotide sequence ID" value="NM_010731.4"/>
</dbReference>
<dbReference type="RefSeq" id="XP_006513342.2">
    <property type="nucleotide sequence ID" value="XM_006513279.2"/>
</dbReference>
<dbReference type="RefSeq" id="XP_006513343.2">
    <property type="nucleotide sequence ID" value="XM_006513280.3"/>
</dbReference>
<dbReference type="RefSeq" id="XP_006513345.1">
    <property type="nucleotide sequence ID" value="XM_006513282.2"/>
</dbReference>
<dbReference type="SMR" id="O88939"/>
<dbReference type="BioGRID" id="201199">
    <property type="interactions" value="10"/>
</dbReference>
<dbReference type="DIP" id="DIP-33318N"/>
<dbReference type="FunCoup" id="O88939">
    <property type="interactions" value="1503"/>
</dbReference>
<dbReference type="IntAct" id="O88939">
    <property type="interactions" value="9"/>
</dbReference>
<dbReference type="STRING" id="10090.ENSMUSP00000047333"/>
<dbReference type="ChEMBL" id="CHEMBL4879422"/>
<dbReference type="GlyGen" id="O88939">
    <property type="glycosylation" value="1 site"/>
</dbReference>
<dbReference type="iPTMnet" id="O88939"/>
<dbReference type="PhosphoSitePlus" id="O88939"/>
<dbReference type="jPOST" id="O88939"/>
<dbReference type="PaxDb" id="10090-ENSMUSP00000047333"/>
<dbReference type="PeptideAtlas" id="O88939"/>
<dbReference type="ProteomicsDB" id="302106">
    <molecule id="O88939-1"/>
</dbReference>
<dbReference type="ProteomicsDB" id="302107">
    <molecule id="O88939-2"/>
</dbReference>
<dbReference type="Pumba" id="O88939"/>
<dbReference type="Antibodypedia" id="11338">
    <property type="antibodies" value="348 antibodies from 39 providers"/>
</dbReference>
<dbReference type="DNASU" id="16969"/>
<dbReference type="Ensembl" id="ENSMUST00000048128.15">
    <molecule id="O88939-1"/>
    <property type="protein sequence ID" value="ENSMUSP00000047333.9"/>
    <property type="gene ID" value="ENSMUSG00000035011.16"/>
</dbReference>
<dbReference type="Ensembl" id="ENSMUST00000117956.2">
    <molecule id="O88939-1"/>
    <property type="protein sequence ID" value="ENSMUSP00000113428.2"/>
    <property type="gene ID" value="ENSMUSG00000035011.16"/>
</dbReference>
<dbReference type="Ensembl" id="ENSMUST00000119606.8">
    <molecule id="O88939-1"/>
    <property type="protein sequence ID" value="ENSMUSP00000113612.2"/>
    <property type="gene ID" value="ENSMUSG00000035011.16"/>
</dbReference>
<dbReference type="GeneID" id="16969"/>
<dbReference type="KEGG" id="mmu:16969"/>
<dbReference type="UCSC" id="uc007gfz.1">
    <molecule id="O88939-1"/>
    <property type="organism name" value="mouse"/>
</dbReference>
<dbReference type="AGR" id="MGI:1335091"/>
<dbReference type="CTD" id="51341"/>
<dbReference type="MGI" id="MGI:1335091">
    <property type="gene designation" value="Zbtb7a"/>
</dbReference>
<dbReference type="VEuPathDB" id="HostDB:ENSMUSG00000035011"/>
<dbReference type="eggNOG" id="KOG1721">
    <property type="taxonomic scope" value="Eukaryota"/>
</dbReference>
<dbReference type="GeneTree" id="ENSGT00940000162053"/>
<dbReference type="HOGENOM" id="CLU_025627_1_0_1"/>
<dbReference type="InParanoid" id="O88939"/>
<dbReference type="OMA" id="MRRCQDQ"/>
<dbReference type="OrthoDB" id="8922241at2759"/>
<dbReference type="PhylomeDB" id="O88939"/>
<dbReference type="TreeFam" id="TF331824"/>
<dbReference type="BioGRID-ORCS" id="16969">
    <property type="hits" value="18 hits in 79 CRISPR screens"/>
</dbReference>
<dbReference type="ChiTaRS" id="Zbtb7a">
    <property type="organism name" value="mouse"/>
</dbReference>
<dbReference type="PRO" id="PR:O88939"/>
<dbReference type="Proteomes" id="UP000000589">
    <property type="component" value="Chromosome 10"/>
</dbReference>
<dbReference type="RNAct" id="O88939">
    <property type="molecule type" value="protein"/>
</dbReference>
<dbReference type="Bgee" id="ENSMUSG00000035011">
    <property type="expression patterns" value="Expressed in ascending aorta and 249 other cell types or tissues"/>
</dbReference>
<dbReference type="ExpressionAtlas" id="O88939">
    <property type="expression patterns" value="baseline and differential"/>
</dbReference>
<dbReference type="GO" id="GO:0005737">
    <property type="term" value="C:cytoplasm"/>
    <property type="evidence" value="ECO:0007669"/>
    <property type="project" value="Ensembl"/>
</dbReference>
<dbReference type="GO" id="GO:0005634">
    <property type="term" value="C:nucleus"/>
    <property type="evidence" value="ECO:0000250"/>
    <property type="project" value="UniProtKB"/>
</dbReference>
<dbReference type="GO" id="GO:0003677">
    <property type="term" value="F:DNA binding"/>
    <property type="evidence" value="ECO:0000314"/>
    <property type="project" value="UniProtKB"/>
</dbReference>
<dbReference type="GO" id="GO:0003700">
    <property type="term" value="F:DNA-binding transcription factor activity"/>
    <property type="evidence" value="ECO:0000314"/>
    <property type="project" value="UniProtKB"/>
</dbReference>
<dbReference type="GO" id="GO:0001227">
    <property type="term" value="F:DNA-binding transcription repressor activity, RNA polymerase II-specific"/>
    <property type="evidence" value="ECO:0000314"/>
    <property type="project" value="NTNU_SB"/>
</dbReference>
<dbReference type="GO" id="GO:0035035">
    <property type="term" value="F:histone acetyltransferase binding"/>
    <property type="evidence" value="ECO:0000353"/>
    <property type="project" value="UniProtKB"/>
</dbReference>
<dbReference type="GO" id="GO:0050681">
    <property type="term" value="F:nuclear androgen receptor binding"/>
    <property type="evidence" value="ECO:0000250"/>
    <property type="project" value="UniProtKB"/>
</dbReference>
<dbReference type="GO" id="GO:0000978">
    <property type="term" value="F:RNA polymerase II cis-regulatory region sequence-specific DNA binding"/>
    <property type="evidence" value="ECO:0000314"/>
    <property type="project" value="NTNU_SB"/>
</dbReference>
<dbReference type="GO" id="GO:0043565">
    <property type="term" value="F:sequence-specific DNA binding"/>
    <property type="evidence" value="ECO:0000314"/>
    <property type="project" value="UniProtKB"/>
</dbReference>
<dbReference type="GO" id="GO:0046332">
    <property type="term" value="F:SMAD binding"/>
    <property type="evidence" value="ECO:0000250"/>
    <property type="project" value="UniProtKB"/>
</dbReference>
<dbReference type="GO" id="GO:0001222">
    <property type="term" value="F:transcription corepressor binding"/>
    <property type="evidence" value="ECO:0000250"/>
    <property type="project" value="UniProtKB"/>
</dbReference>
<dbReference type="GO" id="GO:0008270">
    <property type="term" value="F:zinc ion binding"/>
    <property type="evidence" value="ECO:0007669"/>
    <property type="project" value="UniProtKB-KW"/>
</dbReference>
<dbReference type="GO" id="GO:0030183">
    <property type="term" value="P:B cell differentiation"/>
    <property type="evidence" value="ECO:0000315"/>
    <property type="project" value="UniProtKB"/>
</dbReference>
<dbReference type="GO" id="GO:0051216">
    <property type="term" value="P:cartilage development"/>
    <property type="evidence" value="ECO:0000303"/>
    <property type="project" value="UniProtKB"/>
</dbReference>
<dbReference type="GO" id="GO:0006325">
    <property type="term" value="P:chromatin organization"/>
    <property type="evidence" value="ECO:0000315"/>
    <property type="project" value="UniProtKB"/>
</dbReference>
<dbReference type="GO" id="GO:0006338">
    <property type="term" value="P:chromatin remodeling"/>
    <property type="evidence" value="ECO:0000250"/>
    <property type="project" value="UniProtKB"/>
</dbReference>
<dbReference type="GO" id="GO:0006351">
    <property type="term" value="P:DNA-templated transcription"/>
    <property type="evidence" value="ECO:0000315"/>
    <property type="project" value="UniProtKB"/>
</dbReference>
<dbReference type="GO" id="GO:0097680">
    <property type="term" value="P:double-strand break repair via classical nonhomologous end joining"/>
    <property type="evidence" value="ECO:0000314"/>
    <property type="project" value="UniProtKB"/>
</dbReference>
<dbReference type="GO" id="GO:0043249">
    <property type="term" value="P:erythrocyte maturation"/>
    <property type="evidence" value="ECO:0000315"/>
    <property type="project" value="UniProtKB"/>
</dbReference>
<dbReference type="GO" id="GO:0045444">
    <property type="term" value="P:fat cell differentiation"/>
    <property type="evidence" value="ECO:0000250"/>
    <property type="project" value="UniProtKB"/>
</dbReference>
<dbReference type="GO" id="GO:0060766">
    <property type="term" value="P:negative regulation of androgen receptor signaling pathway"/>
    <property type="evidence" value="ECO:0000250"/>
    <property type="project" value="UniProtKB"/>
</dbReference>
<dbReference type="GO" id="GO:0045892">
    <property type="term" value="P:negative regulation of DNA-templated transcription"/>
    <property type="evidence" value="ECO:0000315"/>
    <property type="project" value="UniProtKB"/>
</dbReference>
<dbReference type="GO" id="GO:0045746">
    <property type="term" value="P:negative regulation of Notch signaling pathway"/>
    <property type="evidence" value="ECO:0000315"/>
    <property type="project" value="UniProtKB"/>
</dbReference>
<dbReference type="GO" id="GO:0000122">
    <property type="term" value="P:negative regulation of transcription by RNA polymerase II"/>
    <property type="evidence" value="ECO:0000314"/>
    <property type="project" value="NTNU_SB"/>
</dbReference>
<dbReference type="GO" id="GO:0030512">
    <property type="term" value="P:negative regulation of transforming growth factor beta receptor signaling pathway"/>
    <property type="evidence" value="ECO:0000250"/>
    <property type="project" value="UniProtKB"/>
</dbReference>
<dbReference type="GO" id="GO:0051092">
    <property type="term" value="P:positive regulation of NF-kappaB transcription factor activity"/>
    <property type="evidence" value="ECO:0000250"/>
    <property type="project" value="UniProtKB"/>
</dbReference>
<dbReference type="GO" id="GO:0034504">
    <property type="term" value="P:protein localization to nucleus"/>
    <property type="evidence" value="ECO:0007669"/>
    <property type="project" value="Ensembl"/>
</dbReference>
<dbReference type="GO" id="GO:0000381">
    <property type="term" value="P:regulation of alternative mRNA splicing, via spliceosome"/>
    <property type="evidence" value="ECO:0000250"/>
    <property type="project" value="UniProtKB"/>
</dbReference>
<dbReference type="GO" id="GO:0042981">
    <property type="term" value="P:regulation of apoptotic process"/>
    <property type="evidence" value="ECO:0000250"/>
    <property type="project" value="UniProtKB"/>
</dbReference>
<dbReference type="GO" id="GO:0051090">
    <property type="term" value="P:regulation of DNA-binding transcription factor activity"/>
    <property type="evidence" value="ECO:0000315"/>
    <property type="project" value="UniProtKB"/>
</dbReference>
<dbReference type="GO" id="GO:0006110">
    <property type="term" value="P:regulation of glycolytic process"/>
    <property type="evidence" value="ECO:0000250"/>
    <property type="project" value="UniProtKB"/>
</dbReference>
<dbReference type="GO" id="GO:2000677">
    <property type="term" value="P:regulation of transcription regulatory region DNA binding"/>
    <property type="evidence" value="ECO:0000250"/>
    <property type="project" value="UniProtKB"/>
</dbReference>
<dbReference type="CDD" id="cd18326">
    <property type="entry name" value="BTB_POZ_ZBTB7A"/>
    <property type="match status" value="1"/>
</dbReference>
<dbReference type="FunFam" id="3.30.710.10:FF:000043">
    <property type="entry name" value="Zinc finger and BTB domain containing 7A"/>
    <property type="match status" value="1"/>
</dbReference>
<dbReference type="FunFam" id="3.30.160.60:FF:001448">
    <property type="entry name" value="Zinc finger and BTB domain containing 7a"/>
    <property type="match status" value="1"/>
</dbReference>
<dbReference type="FunFam" id="3.30.160.60:FF:000115">
    <property type="entry name" value="Zinc finger and BTB domain containing 7C"/>
    <property type="match status" value="1"/>
</dbReference>
<dbReference type="FunFam" id="3.30.160.60:FF:000138">
    <property type="entry name" value="Zinc finger and BTB domain containing 7C"/>
    <property type="match status" value="1"/>
</dbReference>
<dbReference type="FunFam" id="3.30.160.60:FF:003388">
    <property type="entry name" value="Zinc finger and BTB domain-containing protein 7A"/>
    <property type="match status" value="1"/>
</dbReference>
<dbReference type="Gene3D" id="3.30.160.60">
    <property type="entry name" value="Classic Zinc Finger"/>
    <property type="match status" value="4"/>
</dbReference>
<dbReference type="Gene3D" id="3.30.710.10">
    <property type="entry name" value="Potassium Channel Kv1.1, Chain A"/>
    <property type="match status" value="1"/>
</dbReference>
<dbReference type="InterPro" id="IPR000210">
    <property type="entry name" value="BTB/POZ_dom"/>
</dbReference>
<dbReference type="InterPro" id="IPR011333">
    <property type="entry name" value="SKP1/BTB/POZ_sf"/>
</dbReference>
<dbReference type="InterPro" id="IPR036236">
    <property type="entry name" value="Znf_C2H2_sf"/>
</dbReference>
<dbReference type="InterPro" id="IPR013087">
    <property type="entry name" value="Znf_C2H2_type"/>
</dbReference>
<dbReference type="InterPro" id="IPR050457">
    <property type="entry name" value="ZnFinger_BTB_dom_contain"/>
</dbReference>
<dbReference type="PANTHER" id="PTHR46105">
    <property type="entry name" value="AGAP004733-PA"/>
    <property type="match status" value="1"/>
</dbReference>
<dbReference type="PANTHER" id="PTHR46105:SF6">
    <property type="entry name" value="ZINC FINGER AND BTB DOMAIN-CONTAINING PROTEIN 7A"/>
    <property type="match status" value="1"/>
</dbReference>
<dbReference type="Pfam" id="PF00651">
    <property type="entry name" value="BTB"/>
    <property type="match status" value="1"/>
</dbReference>
<dbReference type="Pfam" id="PF00096">
    <property type="entry name" value="zf-C2H2"/>
    <property type="match status" value="2"/>
</dbReference>
<dbReference type="SMART" id="SM00225">
    <property type="entry name" value="BTB"/>
    <property type="match status" value="1"/>
</dbReference>
<dbReference type="SMART" id="SM00355">
    <property type="entry name" value="ZnF_C2H2"/>
    <property type="match status" value="4"/>
</dbReference>
<dbReference type="SUPFAM" id="SSF57667">
    <property type="entry name" value="beta-beta-alpha zinc fingers"/>
    <property type="match status" value="2"/>
</dbReference>
<dbReference type="SUPFAM" id="SSF54695">
    <property type="entry name" value="POZ domain"/>
    <property type="match status" value="1"/>
</dbReference>
<dbReference type="PROSITE" id="PS50097">
    <property type="entry name" value="BTB"/>
    <property type="match status" value="1"/>
</dbReference>
<dbReference type="PROSITE" id="PS00028">
    <property type="entry name" value="ZINC_FINGER_C2H2_1"/>
    <property type="match status" value="3"/>
</dbReference>
<dbReference type="PROSITE" id="PS50157">
    <property type="entry name" value="ZINC_FINGER_C2H2_2"/>
    <property type="match status" value="4"/>
</dbReference>
<gene>
    <name evidence="17" type="primary">Zbtb7a</name>
    <name evidence="15" type="synonym">Lrf</name>
    <name type="synonym">Zbtb7</name>
</gene>
<feature type="chain" id="PRO_0000047716" description="Zinc finger and BTB domain-containing protein 7A">
    <location>
        <begin position="1"/>
        <end position="569"/>
    </location>
</feature>
<feature type="domain" description="BTB" evidence="3">
    <location>
        <begin position="34"/>
        <end position="101"/>
    </location>
</feature>
<feature type="zinc finger region" description="C2H2-type 1" evidence="4">
    <location>
        <begin position="376"/>
        <end position="398"/>
    </location>
</feature>
<feature type="zinc finger region" description="C2H2-type 2" evidence="4">
    <location>
        <begin position="404"/>
        <end position="426"/>
    </location>
</feature>
<feature type="zinc finger region" description="C2H2-type 3" evidence="4">
    <location>
        <begin position="432"/>
        <end position="454"/>
    </location>
</feature>
<feature type="zinc finger region" description="C2H2-type 4; atypical" evidence="4">
    <location>
        <begin position="460"/>
        <end position="484"/>
    </location>
</feature>
<feature type="region of interest" description="Disordered" evidence="5">
    <location>
        <begin position="214"/>
        <end position="304"/>
    </location>
</feature>
<feature type="region of interest" description="Mediates interaction with KHDRBS1" evidence="1">
    <location>
        <begin position="275"/>
        <end position="569"/>
    </location>
</feature>
<feature type="region of interest" description="Mediates interaction with RELA" evidence="12">
    <location>
        <begin position="343"/>
        <end position="569"/>
    </location>
</feature>
<feature type="region of interest" description="Mediates interaction with SMAD4" evidence="1">
    <location>
        <begin position="371"/>
        <end position="569"/>
    </location>
</feature>
<feature type="region of interest" description="Disordered" evidence="5">
    <location>
        <begin position="480"/>
        <end position="569"/>
    </location>
</feature>
<feature type="compositionally biased region" description="Low complexity" evidence="5">
    <location>
        <begin position="279"/>
        <end position="288"/>
    </location>
</feature>
<feature type="compositionally biased region" description="Low complexity" evidence="5">
    <location>
        <begin position="498"/>
        <end position="519"/>
    </location>
</feature>
<feature type="compositionally biased region" description="Gly residues" evidence="5">
    <location>
        <begin position="548"/>
        <end position="557"/>
    </location>
</feature>
<feature type="modified residue" description="Phosphoserine" evidence="18 19">
    <location>
        <position position="331"/>
    </location>
</feature>
<feature type="modified residue" description="Phosphoserine" evidence="1">
    <location>
        <position position="335"/>
    </location>
</feature>
<feature type="modified residue" description="Phosphoserine" evidence="19">
    <location>
        <position position="537"/>
    </location>
</feature>
<feature type="cross-link" description="Glycyl lysine isopeptide (Lys-Gly) (interchain with G-Cter in SUMO2)" evidence="1">
    <location>
        <position position="430"/>
    </location>
</feature>
<feature type="cross-link" description="Glycyl lysine isopeptide (Lys-Gly) (interchain with G-Cter in SUMO2)" evidence="1">
    <location>
        <position position="527"/>
    </location>
</feature>
<feature type="splice variant" id="VSP_035026" description="In isoform 2." evidence="15">
    <location>
        <begin position="532"/>
        <end position="535"/>
    </location>
</feature>
<feature type="sequence conflict" description="In Ref. 2; BAB26897." evidence="16" ref="2">
    <original>L</original>
    <variation>M</variation>
    <location>
        <position position="433"/>
    </location>
</feature>
<feature type="sequence conflict" description="In Ref. 2; BAE32917." evidence="16" ref="2">
    <original>G</original>
    <variation>D</variation>
    <location>
        <position position="548"/>
    </location>
</feature>
<accession>O88939</accession>
<accession>B2RRP7</accession>
<accession>B7ZNL6</accession>
<accession>Q3U372</accession>
<accession>Q9CRJ0</accession>